<evidence type="ECO:0000255" key="1">
    <source>
        <dbReference type="HAMAP-Rule" id="MF_00444"/>
    </source>
</evidence>
<organism>
    <name type="scientific">Wigglesworthia glossinidia brevipalpis</name>
    <dbReference type="NCBI Taxonomy" id="36870"/>
    <lineage>
        <taxon>Bacteria</taxon>
        <taxon>Pseudomonadati</taxon>
        <taxon>Pseudomonadota</taxon>
        <taxon>Gammaproteobacteria</taxon>
        <taxon>Enterobacterales</taxon>
        <taxon>Erwiniaceae</taxon>
        <taxon>Wigglesworthia</taxon>
    </lineage>
</organism>
<comment type="function">
    <text evidence="1">Cleaves peptides in various proteins in a process that requires ATP hydrolysis. Has a chymotrypsin-like activity. Plays a major role in the degradation of misfolded proteins.</text>
</comment>
<comment type="catalytic activity">
    <reaction evidence="1">
        <text>Hydrolysis of proteins to small peptides in the presence of ATP and magnesium. alpha-casein is the usual test substrate. In the absence of ATP, only oligopeptides shorter than five residues are hydrolyzed (such as succinyl-Leu-Tyr-|-NHMec, and Leu-Tyr-Leu-|-Tyr-Trp, in which cleavage of the -Tyr-|-Leu- and -Tyr-|-Trp bonds also occurs).</text>
        <dbReference type="EC" id="3.4.21.92"/>
    </reaction>
</comment>
<comment type="subunit">
    <text evidence="1">Fourteen ClpP subunits assemble into 2 heptameric rings which stack back to back to give a disk-like structure with a central cavity, resembling the structure of eukaryotic proteasomes.</text>
</comment>
<comment type="subcellular location">
    <subcellularLocation>
        <location evidence="1">Cytoplasm</location>
    </subcellularLocation>
</comment>
<comment type="similarity">
    <text evidence="1">Belongs to the peptidase S14 family.</text>
</comment>
<sequence length="194" mass="21574">MNLIPTVVEKNARGERSYDIFSRLLKERIIFVTGKIEDYMANLIIAQMIFLESEDPEKDIFLYINSPGGVVTSGMSIYDTMQFIKCEVSTLCIGQSSSMAALILASGEKGKRFSLPNARIMIHQPLGGSQGQATDIAIHTTEILKIKKCMIELLSKHTGQSAEIISKDTERDRFFSGSEAVIYGLIDKVITCRK</sequence>
<dbReference type="EC" id="3.4.21.92" evidence="1"/>
<dbReference type="EMBL" id="BA000021">
    <property type="protein sequence ID" value="BAC24301.1"/>
    <property type="molecule type" value="Genomic_DNA"/>
</dbReference>
<dbReference type="SMR" id="Q8D346"/>
<dbReference type="STRING" id="36870.gene:10368643"/>
<dbReference type="MEROPS" id="S14.001"/>
<dbReference type="KEGG" id="wbr:clpP"/>
<dbReference type="eggNOG" id="COG0740">
    <property type="taxonomic scope" value="Bacteria"/>
</dbReference>
<dbReference type="HOGENOM" id="CLU_058707_3_2_6"/>
<dbReference type="OrthoDB" id="9802800at2"/>
<dbReference type="Proteomes" id="UP000000562">
    <property type="component" value="Chromosome"/>
</dbReference>
<dbReference type="GO" id="GO:0005737">
    <property type="term" value="C:cytoplasm"/>
    <property type="evidence" value="ECO:0007669"/>
    <property type="project" value="UniProtKB-SubCell"/>
</dbReference>
<dbReference type="GO" id="GO:0009368">
    <property type="term" value="C:endopeptidase Clp complex"/>
    <property type="evidence" value="ECO:0007669"/>
    <property type="project" value="TreeGrafter"/>
</dbReference>
<dbReference type="GO" id="GO:0004176">
    <property type="term" value="F:ATP-dependent peptidase activity"/>
    <property type="evidence" value="ECO:0007669"/>
    <property type="project" value="InterPro"/>
</dbReference>
<dbReference type="GO" id="GO:0051117">
    <property type="term" value="F:ATPase binding"/>
    <property type="evidence" value="ECO:0007669"/>
    <property type="project" value="TreeGrafter"/>
</dbReference>
<dbReference type="GO" id="GO:0004252">
    <property type="term" value="F:serine-type endopeptidase activity"/>
    <property type="evidence" value="ECO:0007669"/>
    <property type="project" value="UniProtKB-UniRule"/>
</dbReference>
<dbReference type="GO" id="GO:0006515">
    <property type="term" value="P:protein quality control for misfolded or incompletely synthesized proteins"/>
    <property type="evidence" value="ECO:0007669"/>
    <property type="project" value="TreeGrafter"/>
</dbReference>
<dbReference type="CDD" id="cd07017">
    <property type="entry name" value="S14_ClpP_2"/>
    <property type="match status" value="1"/>
</dbReference>
<dbReference type="FunFam" id="3.90.226.10:FF:000001">
    <property type="entry name" value="ATP-dependent Clp protease proteolytic subunit"/>
    <property type="match status" value="1"/>
</dbReference>
<dbReference type="Gene3D" id="3.90.226.10">
    <property type="entry name" value="2-enoyl-CoA Hydratase, Chain A, domain 1"/>
    <property type="match status" value="1"/>
</dbReference>
<dbReference type="HAMAP" id="MF_00444">
    <property type="entry name" value="ClpP"/>
    <property type="match status" value="1"/>
</dbReference>
<dbReference type="InterPro" id="IPR001907">
    <property type="entry name" value="ClpP"/>
</dbReference>
<dbReference type="InterPro" id="IPR029045">
    <property type="entry name" value="ClpP/crotonase-like_dom_sf"/>
</dbReference>
<dbReference type="InterPro" id="IPR023562">
    <property type="entry name" value="ClpP/TepA"/>
</dbReference>
<dbReference type="InterPro" id="IPR033135">
    <property type="entry name" value="ClpP_His_AS"/>
</dbReference>
<dbReference type="NCBIfam" id="TIGR00493">
    <property type="entry name" value="clpP"/>
    <property type="match status" value="1"/>
</dbReference>
<dbReference type="NCBIfam" id="NF001368">
    <property type="entry name" value="PRK00277.1"/>
    <property type="match status" value="1"/>
</dbReference>
<dbReference type="NCBIfam" id="NF009205">
    <property type="entry name" value="PRK12553.1"/>
    <property type="match status" value="1"/>
</dbReference>
<dbReference type="PANTHER" id="PTHR10381">
    <property type="entry name" value="ATP-DEPENDENT CLP PROTEASE PROTEOLYTIC SUBUNIT"/>
    <property type="match status" value="1"/>
</dbReference>
<dbReference type="PANTHER" id="PTHR10381:SF70">
    <property type="entry name" value="ATP-DEPENDENT CLP PROTEASE PROTEOLYTIC SUBUNIT"/>
    <property type="match status" value="1"/>
</dbReference>
<dbReference type="Pfam" id="PF00574">
    <property type="entry name" value="CLP_protease"/>
    <property type="match status" value="1"/>
</dbReference>
<dbReference type="PRINTS" id="PR00127">
    <property type="entry name" value="CLPPROTEASEP"/>
</dbReference>
<dbReference type="SUPFAM" id="SSF52096">
    <property type="entry name" value="ClpP/crotonase"/>
    <property type="match status" value="1"/>
</dbReference>
<dbReference type="PROSITE" id="PS00382">
    <property type="entry name" value="CLP_PROTEASE_HIS"/>
    <property type="match status" value="1"/>
</dbReference>
<proteinExistence type="inferred from homology"/>
<protein>
    <recommendedName>
        <fullName evidence="1">ATP-dependent Clp protease proteolytic subunit</fullName>
        <ecNumber evidence="1">3.4.21.92</ecNumber>
    </recommendedName>
    <alternativeName>
        <fullName evidence="1">Endopeptidase Clp</fullName>
    </alternativeName>
</protein>
<feature type="chain" id="PRO_0000179715" description="ATP-dependent Clp protease proteolytic subunit">
    <location>
        <begin position="1"/>
        <end position="194"/>
    </location>
</feature>
<feature type="active site" description="Nucleophile" evidence="1">
    <location>
        <position position="98"/>
    </location>
</feature>
<feature type="active site" evidence="1">
    <location>
        <position position="123"/>
    </location>
</feature>
<accession>Q8D346</accession>
<keyword id="KW-0963">Cytoplasm</keyword>
<keyword id="KW-0378">Hydrolase</keyword>
<keyword id="KW-0645">Protease</keyword>
<keyword id="KW-1185">Reference proteome</keyword>
<keyword id="KW-0720">Serine protease</keyword>
<reference key="1">
    <citation type="journal article" date="2002" name="Nat. Genet.">
        <title>Genome sequence of the endocellular obligate symbiont of tsetse flies, Wigglesworthia glossinidia.</title>
        <authorList>
            <person name="Akman L."/>
            <person name="Yamashita A."/>
            <person name="Watanabe H."/>
            <person name="Oshima K."/>
            <person name="Shiba T."/>
            <person name="Hattori M."/>
            <person name="Aksoy S."/>
        </authorList>
    </citation>
    <scope>NUCLEOTIDE SEQUENCE [LARGE SCALE GENOMIC DNA]</scope>
</reference>
<gene>
    <name evidence="1" type="primary">clpP</name>
    <name type="ordered locus">WIGBR1550</name>
</gene>
<name>CLPP_WIGBR</name>